<feature type="chain" id="PRO_0000362748" description="NADH-quinone oxidoreductase subunit A">
    <location>
        <begin position="1"/>
        <end position="207"/>
    </location>
</feature>
<feature type="transmembrane region" description="Helical" evidence="1">
    <location>
        <begin position="6"/>
        <end position="26"/>
    </location>
</feature>
<feature type="transmembrane region" description="Helical" evidence="1">
    <location>
        <begin position="62"/>
        <end position="82"/>
    </location>
</feature>
<feature type="transmembrane region" description="Helical" evidence="1">
    <location>
        <begin position="87"/>
        <end position="107"/>
    </location>
</feature>
<organism>
    <name type="scientific">Psychrobacter arcticus (strain DSM 17307 / VKM B-2377 / 273-4)</name>
    <dbReference type="NCBI Taxonomy" id="259536"/>
    <lineage>
        <taxon>Bacteria</taxon>
        <taxon>Pseudomonadati</taxon>
        <taxon>Pseudomonadota</taxon>
        <taxon>Gammaproteobacteria</taxon>
        <taxon>Moraxellales</taxon>
        <taxon>Moraxellaceae</taxon>
        <taxon>Psychrobacter</taxon>
    </lineage>
</organism>
<name>NUOA_PSYA2</name>
<accession>Q4FU64</accession>
<evidence type="ECO:0000255" key="1">
    <source>
        <dbReference type="HAMAP-Rule" id="MF_01394"/>
    </source>
</evidence>
<sequence>MSAFNWSAIAFILAAIALVVFMLVVPRLLGGRSHGSQKEEIFEAGVVGSGNARIRLSAKFYLVAIFFVIFDLEALYLYAYAVSVREAGWLGFAAAAIFITILIIGLVYELSLGAMNWAPADKLRKKARLYAAPAGFSLADITKFDGVDELMVDPTGKIPAQSSGQINVSNNIETNRRHLQNIDHINTTGNVTSVDFATSAQTDNIKR</sequence>
<comment type="function">
    <text evidence="1">NDH-1 shuttles electrons from NADH, via FMN and iron-sulfur (Fe-S) centers, to quinones in the respiratory chain. The immediate electron acceptor for the enzyme in this species is believed to be ubiquinone. Couples the redox reaction to proton translocation (for every two electrons transferred, four hydrogen ions are translocated across the cytoplasmic membrane), and thus conserves the redox energy in a proton gradient.</text>
</comment>
<comment type="catalytic activity">
    <reaction evidence="1">
        <text>a quinone + NADH + 5 H(+)(in) = a quinol + NAD(+) + 4 H(+)(out)</text>
        <dbReference type="Rhea" id="RHEA:57888"/>
        <dbReference type="ChEBI" id="CHEBI:15378"/>
        <dbReference type="ChEBI" id="CHEBI:24646"/>
        <dbReference type="ChEBI" id="CHEBI:57540"/>
        <dbReference type="ChEBI" id="CHEBI:57945"/>
        <dbReference type="ChEBI" id="CHEBI:132124"/>
    </reaction>
</comment>
<comment type="subunit">
    <text evidence="1">NDH-1 is composed of 14 different subunits. Subunits NuoA, H, J, K, L, M, N constitute the membrane sector of the complex.</text>
</comment>
<comment type="subcellular location">
    <subcellularLocation>
        <location evidence="1">Cell inner membrane</location>
        <topology evidence="1">Multi-pass membrane protein</topology>
    </subcellularLocation>
</comment>
<comment type="similarity">
    <text evidence="1">Belongs to the complex I subunit 3 family.</text>
</comment>
<gene>
    <name evidence="1" type="primary">nuoA</name>
    <name type="ordered locus">Psyc_0584</name>
</gene>
<reference key="1">
    <citation type="journal article" date="2010" name="Appl. Environ. Microbiol.">
        <title>The genome sequence of Psychrobacter arcticus 273-4, a psychroactive Siberian permafrost bacterium, reveals mechanisms for adaptation to low-temperature growth.</title>
        <authorList>
            <person name="Ayala-del-Rio H.L."/>
            <person name="Chain P.S."/>
            <person name="Grzymski J.J."/>
            <person name="Ponder M.A."/>
            <person name="Ivanova N."/>
            <person name="Bergholz P.W."/>
            <person name="Di Bartolo G."/>
            <person name="Hauser L."/>
            <person name="Land M."/>
            <person name="Bakermans C."/>
            <person name="Rodrigues D."/>
            <person name="Klappenbach J."/>
            <person name="Zarka D."/>
            <person name="Larimer F."/>
            <person name="Richardson P."/>
            <person name="Murray A."/>
            <person name="Thomashow M."/>
            <person name="Tiedje J.M."/>
        </authorList>
    </citation>
    <scope>NUCLEOTIDE SEQUENCE [LARGE SCALE GENOMIC DNA]</scope>
    <source>
        <strain>DSM 17307 / VKM B-2377 / 273-4</strain>
    </source>
</reference>
<protein>
    <recommendedName>
        <fullName evidence="1">NADH-quinone oxidoreductase subunit A</fullName>
        <ecNumber evidence="1">7.1.1.-</ecNumber>
    </recommendedName>
    <alternativeName>
        <fullName evidence="1">NADH dehydrogenase I subunit A</fullName>
    </alternativeName>
    <alternativeName>
        <fullName evidence="1">NDH-1 subunit A</fullName>
    </alternativeName>
    <alternativeName>
        <fullName evidence="1">NUO1</fullName>
    </alternativeName>
</protein>
<proteinExistence type="inferred from homology"/>
<keyword id="KW-0997">Cell inner membrane</keyword>
<keyword id="KW-1003">Cell membrane</keyword>
<keyword id="KW-0472">Membrane</keyword>
<keyword id="KW-0520">NAD</keyword>
<keyword id="KW-0874">Quinone</keyword>
<keyword id="KW-1185">Reference proteome</keyword>
<keyword id="KW-1278">Translocase</keyword>
<keyword id="KW-0812">Transmembrane</keyword>
<keyword id="KW-1133">Transmembrane helix</keyword>
<keyword id="KW-0813">Transport</keyword>
<keyword id="KW-0830">Ubiquinone</keyword>
<dbReference type="EC" id="7.1.1.-" evidence="1"/>
<dbReference type="EMBL" id="CP000082">
    <property type="protein sequence ID" value="AAZ18444.1"/>
    <property type="molecule type" value="Genomic_DNA"/>
</dbReference>
<dbReference type="RefSeq" id="WP_011279873.1">
    <property type="nucleotide sequence ID" value="NC_007204.1"/>
</dbReference>
<dbReference type="SMR" id="Q4FU64"/>
<dbReference type="STRING" id="259536.Psyc_0584"/>
<dbReference type="KEGG" id="par:Psyc_0584"/>
<dbReference type="eggNOG" id="COG0838">
    <property type="taxonomic scope" value="Bacteria"/>
</dbReference>
<dbReference type="HOGENOM" id="CLU_1486001_0_0_6"/>
<dbReference type="OrthoDB" id="9791970at2"/>
<dbReference type="Proteomes" id="UP000000546">
    <property type="component" value="Chromosome"/>
</dbReference>
<dbReference type="GO" id="GO:0030964">
    <property type="term" value="C:NADH dehydrogenase complex"/>
    <property type="evidence" value="ECO:0007669"/>
    <property type="project" value="TreeGrafter"/>
</dbReference>
<dbReference type="GO" id="GO:0005886">
    <property type="term" value="C:plasma membrane"/>
    <property type="evidence" value="ECO:0007669"/>
    <property type="project" value="UniProtKB-SubCell"/>
</dbReference>
<dbReference type="GO" id="GO:0008137">
    <property type="term" value="F:NADH dehydrogenase (ubiquinone) activity"/>
    <property type="evidence" value="ECO:0007669"/>
    <property type="project" value="InterPro"/>
</dbReference>
<dbReference type="GO" id="GO:0050136">
    <property type="term" value="F:NADH:ubiquinone reductase (non-electrogenic) activity"/>
    <property type="evidence" value="ECO:0007669"/>
    <property type="project" value="UniProtKB-UniRule"/>
</dbReference>
<dbReference type="GO" id="GO:0048038">
    <property type="term" value="F:quinone binding"/>
    <property type="evidence" value="ECO:0007669"/>
    <property type="project" value="UniProtKB-KW"/>
</dbReference>
<dbReference type="Gene3D" id="1.20.58.1610">
    <property type="entry name" value="NADH:ubiquinone/plastoquinone oxidoreductase, chain 3"/>
    <property type="match status" value="1"/>
</dbReference>
<dbReference type="HAMAP" id="MF_01394">
    <property type="entry name" value="NDH1_NuoA"/>
    <property type="match status" value="1"/>
</dbReference>
<dbReference type="InterPro" id="IPR023043">
    <property type="entry name" value="NAD(P)H_OxRDtase_bac/plastid"/>
</dbReference>
<dbReference type="InterPro" id="IPR000440">
    <property type="entry name" value="NADH_UbQ/plastoQ_OxRdtase_su3"/>
</dbReference>
<dbReference type="InterPro" id="IPR038430">
    <property type="entry name" value="NDAH_ubi_oxred_su3_sf"/>
</dbReference>
<dbReference type="PANTHER" id="PTHR11058:SF21">
    <property type="entry name" value="NADH-QUINONE OXIDOREDUCTASE SUBUNIT A"/>
    <property type="match status" value="1"/>
</dbReference>
<dbReference type="PANTHER" id="PTHR11058">
    <property type="entry name" value="NADH-UBIQUINONE OXIDOREDUCTASE CHAIN 3"/>
    <property type="match status" value="1"/>
</dbReference>
<dbReference type="Pfam" id="PF00507">
    <property type="entry name" value="Oxidored_q4"/>
    <property type="match status" value="1"/>
</dbReference>